<proteinExistence type="inferred from homology"/>
<name>OBG_LACLA</name>
<keyword id="KW-0963">Cytoplasm</keyword>
<keyword id="KW-0342">GTP-binding</keyword>
<keyword id="KW-0378">Hydrolase</keyword>
<keyword id="KW-0460">Magnesium</keyword>
<keyword id="KW-0479">Metal-binding</keyword>
<keyword id="KW-0547">Nucleotide-binding</keyword>
<keyword id="KW-1185">Reference proteome</keyword>
<evidence type="ECO:0000255" key="1">
    <source>
        <dbReference type="HAMAP-Rule" id="MF_01454"/>
    </source>
</evidence>
<evidence type="ECO:0000255" key="2">
    <source>
        <dbReference type="PROSITE-ProRule" id="PRU01229"/>
    </source>
</evidence>
<evidence type="ECO:0000255" key="3">
    <source>
        <dbReference type="PROSITE-ProRule" id="PRU01231"/>
    </source>
</evidence>
<sequence length="437" mass="48234">MSLFLDTARIEVKAGKGGDGAVAFRREKYVPDGGPAGGDGGKGGSVIFKVDEGMSTLMDFRYNRIFRGKPGEKGMNKGMHGRGAEDLIVHVPQGTTVKDNETGDVLVDLIEKDQEFAVAKGGRGGRGNIRFATPRNPAPEVAENGEPGEDKILLLELRVLADVGLVGFPSVGKSTLLSVVSNARPKIGAYHFTTITPNIGMVQVGYGDSFVMADMPGLIEGAHSGAGLGIQFLRHIERTRVLLHVLDMSELEGRDPYEDYKTINDELESYNLRLMERPQIIVANKMDMPEAAERLAEFKEKLAADLGPDKEMPEIFEVSGLTKTGLQGLLARTSELLAQTPEFLLYDEDELADETAYYGFEEEEKPFKVSRDDDGGWRLSGDKIERLFIMTNFDHDESVMKFARQMRAMGVDETLRSMGAKDGDYVRIQKFEFEFVD</sequence>
<gene>
    <name evidence="1" type="primary">obg</name>
    <name type="ordered locus">LL1587</name>
    <name type="ORF">L016</name>
    <name type="ORF">L0160</name>
</gene>
<dbReference type="EC" id="3.6.5.-" evidence="1"/>
<dbReference type="EMBL" id="AE005176">
    <property type="protein sequence ID" value="AAK05685.1"/>
    <property type="molecule type" value="Genomic_DNA"/>
</dbReference>
<dbReference type="PIR" id="C86823">
    <property type="entry name" value="C86823"/>
</dbReference>
<dbReference type="SMR" id="Q9CF94"/>
<dbReference type="PaxDb" id="272623-L0160"/>
<dbReference type="EnsemblBacteria" id="AAK05685">
    <property type="protein sequence ID" value="AAK05685"/>
    <property type="gene ID" value="L0160"/>
</dbReference>
<dbReference type="KEGG" id="lla:L0160"/>
<dbReference type="eggNOG" id="COG0536">
    <property type="taxonomic scope" value="Bacteria"/>
</dbReference>
<dbReference type="HOGENOM" id="CLU_011747_2_1_9"/>
<dbReference type="OrthoDB" id="2361638at2"/>
<dbReference type="Proteomes" id="UP000002196">
    <property type="component" value="Chromosome"/>
</dbReference>
<dbReference type="GO" id="GO:0005737">
    <property type="term" value="C:cytoplasm"/>
    <property type="evidence" value="ECO:0007669"/>
    <property type="project" value="UniProtKB-SubCell"/>
</dbReference>
<dbReference type="GO" id="GO:0005525">
    <property type="term" value="F:GTP binding"/>
    <property type="evidence" value="ECO:0007669"/>
    <property type="project" value="UniProtKB-UniRule"/>
</dbReference>
<dbReference type="GO" id="GO:0003924">
    <property type="term" value="F:GTPase activity"/>
    <property type="evidence" value="ECO:0007669"/>
    <property type="project" value="UniProtKB-UniRule"/>
</dbReference>
<dbReference type="GO" id="GO:0000287">
    <property type="term" value="F:magnesium ion binding"/>
    <property type="evidence" value="ECO:0007669"/>
    <property type="project" value="InterPro"/>
</dbReference>
<dbReference type="GO" id="GO:0042254">
    <property type="term" value="P:ribosome biogenesis"/>
    <property type="evidence" value="ECO:0007669"/>
    <property type="project" value="UniProtKB-UniRule"/>
</dbReference>
<dbReference type="CDD" id="cd01898">
    <property type="entry name" value="Obg"/>
    <property type="match status" value="1"/>
</dbReference>
<dbReference type="FunFam" id="2.70.210.12:FF:000001">
    <property type="entry name" value="GTPase Obg"/>
    <property type="match status" value="1"/>
</dbReference>
<dbReference type="Gene3D" id="3.30.300.350">
    <property type="entry name" value="GTP-binding protein OBG, C-terminal domain"/>
    <property type="match status" value="1"/>
</dbReference>
<dbReference type="Gene3D" id="2.70.210.12">
    <property type="entry name" value="GTP1/OBG domain"/>
    <property type="match status" value="1"/>
</dbReference>
<dbReference type="Gene3D" id="3.40.50.300">
    <property type="entry name" value="P-loop containing nucleotide triphosphate hydrolases"/>
    <property type="match status" value="1"/>
</dbReference>
<dbReference type="HAMAP" id="MF_01454">
    <property type="entry name" value="GTPase_Obg"/>
    <property type="match status" value="1"/>
</dbReference>
<dbReference type="InterPro" id="IPR031167">
    <property type="entry name" value="G_OBG"/>
</dbReference>
<dbReference type="InterPro" id="IPR006073">
    <property type="entry name" value="GTP-bd"/>
</dbReference>
<dbReference type="InterPro" id="IPR014100">
    <property type="entry name" value="GTP-bd_Obg/CgtA"/>
</dbReference>
<dbReference type="InterPro" id="IPR036346">
    <property type="entry name" value="GTP-bd_prot_GTP1/OBG_C_sf"/>
</dbReference>
<dbReference type="InterPro" id="IPR006074">
    <property type="entry name" value="GTP1-OBG_CS"/>
</dbReference>
<dbReference type="InterPro" id="IPR006169">
    <property type="entry name" value="GTP1_OBG_dom"/>
</dbReference>
<dbReference type="InterPro" id="IPR036726">
    <property type="entry name" value="GTP1_OBG_dom_sf"/>
</dbReference>
<dbReference type="InterPro" id="IPR045086">
    <property type="entry name" value="OBG_GTPase"/>
</dbReference>
<dbReference type="InterPro" id="IPR015349">
    <property type="entry name" value="OCT_dom"/>
</dbReference>
<dbReference type="InterPro" id="IPR027417">
    <property type="entry name" value="P-loop_NTPase"/>
</dbReference>
<dbReference type="NCBIfam" id="TIGR02729">
    <property type="entry name" value="Obg_CgtA"/>
    <property type="match status" value="1"/>
</dbReference>
<dbReference type="NCBIfam" id="TIGR03595">
    <property type="entry name" value="Obg_CgtA_exten"/>
    <property type="match status" value="1"/>
</dbReference>
<dbReference type="NCBIfam" id="NF008954">
    <property type="entry name" value="PRK12296.1"/>
    <property type="match status" value="1"/>
</dbReference>
<dbReference type="NCBIfam" id="NF008955">
    <property type="entry name" value="PRK12297.1"/>
    <property type="match status" value="1"/>
</dbReference>
<dbReference type="NCBIfam" id="NF008956">
    <property type="entry name" value="PRK12299.1"/>
    <property type="match status" value="1"/>
</dbReference>
<dbReference type="PANTHER" id="PTHR11702">
    <property type="entry name" value="DEVELOPMENTALLY REGULATED GTP-BINDING PROTEIN-RELATED"/>
    <property type="match status" value="1"/>
</dbReference>
<dbReference type="PANTHER" id="PTHR11702:SF31">
    <property type="entry name" value="MITOCHONDRIAL RIBOSOME-ASSOCIATED GTPASE 2"/>
    <property type="match status" value="1"/>
</dbReference>
<dbReference type="Pfam" id="PF09269">
    <property type="entry name" value="DUF1967"/>
    <property type="match status" value="1"/>
</dbReference>
<dbReference type="Pfam" id="PF01018">
    <property type="entry name" value="GTP1_OBG"/>
    <property type="match status" value="1"/>
</dbReference>
<dbReference type="Pfam" id="PF01926">
    <property type="entry name" value="MMR_HSR1"/>
    <property type="match status" value="1"/>
</dbReference>
<dbReference type="PIRSF" id="PIRSF002401">
    <property type="entry name" value="GTP_bd_Obg/CgtA"/>
    <property type="match status" value="1"/>
</dbReference>
<dbReference type="PRINTS" id="PR00326">
    <property type="entry name" value="GTP1OBG"/>
</dbReference>
<dbReference type="SUPFAM" id="SSF102741">
    <property type="entry name" value="Obg GTP-binding protein C-terminal domain"/>
    <property type="match status" value="1"/>
</dbReference>
<dbReference type="SUPFAM" id="SSF82051">
    <property type="entry name" value="Obg GTP-binding protein N-terminal domain"/>
    <property type="match status" value="1"/>
</dbReference>
<dbReference type="SUPFAM" id="SSF52540">
    <property type="entry name" value="P-loop containing nucleoside triphosphate hydrolases"/>
    <property type="match status" value="1"/>
</dbReference>
<dbReference type="PROSITE" id="PS51710">
    <property type="entry name" value="G_OBG"/>
    <property type="match status" value="1"/>
</dbReference>
<dbReference type="PROSITE" id="PS00905">
    <property type="entry name" value="GTP1_OBG"/>
    <property type="match status" value="1"/>
</dbReference>
<dbReference type="PROSITE" id="PS51883">
    <property type="entry name" value="OBG"/>
    <property type="match status" value="1"/>
</dbReference>
<dbReference type="PROSITE" id="PS51881">
    <property type="entry name" value="OCT"/>
    <property type="match status" value="1"/>
</dbReference>
<protein>
    <recommendedName>
        <fullName evidence="1">GTPase Obg</fullName>
        <ecNumber evidence="1">3.6.5.-</ecNumber>
    </recommendedName>
    <alternativeName>
        <fullName evidence="1">GTP-binding protein Obg</fullName>
    </alternativeName>
</protein>
<comment type="function">
    <text evidence="1">An essential GTPase which binds GTP, GDP and possibly (p)ppGpp with moderate affinity, with high nucleotide exchange rates and a fairly low GTP hydrolysis rate. Plays a role in control of the cell cycle, stress response, ribosome biogenesis and in those bacteria that undergo differentiation, in morphogenesis control.</text>
</comment>
<comment type="cofactor">
    <cofactor evidence="1">
        <name>Mg(2+)</name>
        <dbReference type="ChEBI" id="CHEBI:18420"/>
    </cofactor>
</comment>
<comment type="subunit">
    <text evidence="1">Monomer.</text>
</comment>
<comment type="subcellular location">
    <subcellularLocation>
        <location evidence="1">Cytoplasm</location>
    </subcellularLocation>
</comment>
<comment type="similarity">
    <text evidence="1">Belongs to the TRAFAC class OBG-HflX-like GTPase superfamily. OBG GTPase family.</text>
</comment>
<accession>Q9CF94</accession>
<organism>
    <name type="scientific">Lactococcus lactis subsp. lactis (strain IL1403)</name>
    <name type="common">Streptococcus lactis</name>
    <dbReference type="NCBI Taxonomy" id="272623"/>
    <lineage>
        <taxon>Bacteria</taxon>
        <taxon>Bacillati</taxon>
        <taxon>Bacillota</taxon>
        <taxon>Bacilli</taxon>
        <taxon>Lactobacillales</taxon>
        <taxon>Streptococcaceae</taxon>
        <taxon>Lactococcus</taxon>
    </lineage>
</organism>
<feature type="chain" id="PRO_0000386006" description="GTPase Obg">
    <location>
        <begin position="1"/>
        <end position="437"/>
    </location>
</feature>
<feature type="domain" description="Obg" evidence="3">
    <location>
        <begin position="2"/>
        <end position="160"/>
    </location>
</feature>
<feature type="domain" description="OBG-type G" evidence="1">
    <location>
        <begin position="161"/>
        <end position="338"/>
    </location>
</feature>
<feature type="domain" description="OCT" evidence="2">
    <location>
        <begin position="359"/>
        <end position="437"/>
    </location>
</feature>
<feature type="binding site" evidence="1">
    <location>
        <begin position="167"/>
        <end position="174"/>
    </location>
    <ligand>
        <name>GTP</name>
        <dbReference type="ChEBI" id="CHEBI:37565"/>
    </ligand>
</feature>
<feature type="binding site" evidence="1">
    <location>
        <position position="174"/>
    </location>
    <ligand>
        <name>Mg(2+)</name>
        <dbReference type="ChEBI" id="CHEBI:18420"/>
    </ligand>
</feature>
<feature type="binding site" evidence="1">
    <location>
        <begin position="192"/>
        <end position="196"/>
    </location>
    <ligand>
        <name>GTP</name>
        <dbReference type="ChEBI" id="CHEBI:37565"/>
    </ligand>
</feature>
<feature type="binding site" evidence="1">
    <location>
        <position position="194"/>
    </location>
    <ligand>
        <name>Mg(2+)</name>
        <dbReference type="ChEBI" id="CHEBI:18420"/>
    </ligand>
</feature>
<feature type="binding site" evidence="1">
    <location>
        <begin position="214"/>
        <end position="217"/>
    </location>
    <ligand>
        <name>GTP</name>
        <dbReference type="ChEBI" id="CHEBI:37565"/>
    </ligand>
</feature>
<feature type="binding site" evidence="1">
    <location>
        <begin position="284"/>
        <end position="287"/>
    </location>
    <ligand>
        <name>GTP</name>
        <dbReference type="ChEBI" id="CHEBI:37565"/>
    </ligand>
</feature>
<feature type="binding site" evidence="1">
    <location>
        <begin position="319"/>
        <end position="321"/>
    </location>
    <ligand>
        <name>GTP</name>
        <dbReference type="ChEBI" id="CHEBI:37565"/>
    </ligand>
</feature>
<reference key="1">
    <citation type="journal article" date="2001" name="Genome Res.">
        <title>The complete genome sequence of the lactic acid bacterium Lactococcus lactis ssp. lactis IL1403.</title>
        <authorList>
            <person name="Bolotin A."/>
            <person name="Wincker P."/>
            <person name="Mauger S."/>
            <person name="Jaillon O."/>
            <person name="Malarme K."/>
            <person name="Weissenbach J."/>
            <person name="Ehrlich S.D."/>
            <person name="Sorokin A."/>
        </authorList>
    </citation>
    <scope>NUCLEOTIDE SEQUENCE [LARGE SCALE GENOMIC DNA]</scope>
    <source>
        <strain>IL1403</strain>
    </source>
</reference>